<name>ATPG_SHEAM</name>
<protein>
    <recommendedName>
        <fullName evidence="1">ATP synthase gamma chain</fullName>
    </recommendedName>
    <alternativeName>
        <fullName evidence="1">ATP synthase F1 sector gamma subunit</fullName>
    </alternativeName>
    <alternativeName>
        <fullName evidence="1">F-ATPase gamma subunit</fullName>
    </alternativeName>
</protein>
<dbReference type="EMBL" id="CP000507">
    <property type="protein sequence ID" value="ABM01848.1"/>
    <property type="molecule type" value="Genomic_DNA"/>
</dbReference>
<dbReference type="RefSeq" id="WP_011761751.1">
    <property type="nucleotide sequence ID" value="NC_008700.1"/>
</dbReference>
<dbReference type="SMR" id="A1SBU1"/>
<dbReference type="STRING" id="326297.Sama_3645"/>
<dbReference type="KEGG" id="saz:Sama_3645"/>
<dbReference type="eggNOG" id="COG0224">
    <property type="taxonomic scope" value="Bacteria"/>
</dbReference>
<dbReference type="HOGENOM" id="CLU_050669_0_1_6"/>
<dbReference type="OrthoDB" id="9812769at2"/>
<dbReference type="Proteomes" id="UP000009175">
    <property type="component" value="Chromosome"/>
</dbReference>
<dbReference type="GO" id="GO:0005886">
    <property type="term" value="C:plasma membrane"/>
    <property type="evidence" value="ECO:0007669"/>
    <property type="project" value="UniProtKB-SubCell"/>
</dbReference>
<dbReference type="GO" id="GO:0045259">
    <property type="term" value="C:proton-transporting ATP synthase complex"/>
    <property type="evidence" value="ECO:0007669"/>
    <property type="project" value="UniProtKB-KW"/>
</dbReference>
<dbReference type="GO" id="GO:0005524">
    <property type="term" value="F:ATP binding"/>
    <property type="evidence" value="ECO:0007669"/>
    <property type="project" value="UniProtKB-UniRule"/>
</dbReference>
<dbReference type="GO" id="GO:0046933">
    <property type="term" value="F:proton-transporting ATP synthase activity, rotational mechanism"/>
    <property type="evidence" value="ECO:0007669"/>
    <property type="project" value="UniProtKB-UniRule"/>
</dbReference>
<dbReference type="GO" id="GO:0042777">
    <property type="term" value="P:proton motive force-driven plasma membrane ATP synthesis"/>
    <property type="evidence" value="ECO:0007669"/>
    <property type="project" value="UniProtKB-UniRule"/>
</dbReference>
<dbReference type="CDD" id="cd12151">
    <property type="entry name" value="F1-ATPase_gamma"/>
    <property type="match status" value="1"/>
</dbReference>
<dbReference type="FunFam" id="1.10.287.80:FF:000005">
    <property type="entry name" value="ATP synthase gamma chain"/>
    <property type="match status" value="2"/>
</dbReference>
<dbReference type="FunFam" id="3.40.1380.10:FF:000001">
    <property type="entry name" value="ATP synthase gamma chain"/>
    <property type="match status" value="1"/>
</dbReference>
<dbReference type="Gene3D" id="3.40.1380.10">
    <property type="match status" value="1"/>
</dbReference>
<dbReference type="Gene3D" id="1.10.287.80">
    <property type="entry name" value="ATP synthase, gamma subunit, helix hairpin domain"/>
    <property type="match status" value="1"/>
</dbReference>
<dbReference type="HAMAP" id="MF_00815">
    <property type="entry name" value="ATP_synth_gamma_bact"/>
    <property type="match status" value="1"/>
</dbReference>
<dbReference type="InterPro" id="IPR035968">
    <property type="entry name" value="ATP_synth_F1_ATPase_gsu"/>
</dbReference>
<dbReference type="InterPro" id="IPR000131">
    <property type="entry name" value="ATP_synth_F1_gsu"/>
</dbReference>
<dbReference type="InterPro" id="IPR023632">
    <property type="entry name" value="ATP_synth_F1_gsu_CS"/>
</dbReference>
<dbReference type="NCBIfam" id="TIGR01146">
    <property type="entry name" value="ATPsyn_F1gamma"/>
    <property type="match status" value="1"/>
</dbReference>
<dbReference type="NCBIfam" id="NF004144">
    <property type="entry name" value="PRK05621.1-1"/>
    <property type="match status" value="1"/>
</dbReference>
<dbReference type="PANTHER" id="PTHR11693">
    <property type="entry name" value="ATP SYNTHASE GAMMA CHAIN"/>
    <property type="match status" value="1"/>
</dbReference>
<dbReference type="PANTHER" id="PTHR11693:SF22">
    <property type="entry name" value="ATP SYNTHASE SUBUNIT GAMMA, MITOCHONDRIAL"/>
    <property type="match status" value="1"/>
</dbReference>
<dbReference type="Pfam" id="PF00231">
    <property type="entry name" value="ATP-synt"/>
    <property type="match status" value="1"/>
</dbReference>
<dbReference type="PRINTS" id="PR00126">
    <property type="entry name" value="ATPASEGAMMA"/>
</dbReference>
<dbReference type="SUPFAM" id="SSF52943">
    <property type="entry name" value="ATP synthase (F1-ATPase), gamma subunit"/>
    <property type="match status" value="1"/>
</dbReference>
<dbReference type="PROSITE" id="PS00153">
    <property type="entry name" value="ATPASE_GAMMA"/>
    <property type="match status" value="1"/>
</dbReference>
<organism>
    <name type="scientific">Shewanella amazonensis (strain ATCC BAA-1098 / SB2B)</name>
    <dbReference type="NCBI Taxonomy" id="326297"/>
    <lineage>
        <taxon>Bacteria</taxon>
        <taxon>Pseudomonadati</taxon>
        <taxon>Pseudomonadota</taxon>
        <taxon>Gammaproteobacteria</taxon>
        <taxon>Alteromonadales</taxon>
        <taxon>Shewanellaceae</taxon>
        <taxon>Shewanella</taxon>
    </lineage>
</organism>
<evidence type="ECO:0000255" key="1">
    <source>
        <dbReference type="HAMAP-Rule" id="MF_00815"/>
    </source>
</evidence>
<keyword id="KW-0066">ATP synthesis</keyword>
<keyword id="KW-0997">Cell inner membrane</keyword>
<keyword id="KW-1003">Cell membrane</keyword>
<keyword id="KW-0139">CF(1)</keyword>
<keyword id="KW-0375">Hydrogen ion transport</keyword>
<keyword id="KW-0406">Ion transport</keyword>
<keyword id="KW-0472">Membrane</keyword>
<keyword id="KW-1185">Reference proteome</keyword>
<keyword id="KW-0813">Transport</keyword>
<proteinExistence type="inferred from homology"/>
<gene>
    <name evidence="1" type="primary">atpG</name>
    <name type="ordered locus">Sama_3645</name>
</gene>
<comment type="function">
    <text evidence="1">Produces ATP from ADP in the presence of a proton gradient across the membrane. The gamma chain is believed to be important in regulating ATPase activity and the flow of protons through the CF(0) complex.</text>
</comment>
<comment type="subunit">
    <text evidence="1">F-type ATPases have 2 components, CF(1) - the catalytic core - and CF(0) - the membrane proton channel. CF(1) has five subunits: alpha(3), beta(3), gamma(1), delta(1), epsilon(1). CF(0) has three main subunits: a, b and c.</text>
</comment>
<comment type="subcellular location">
    <subcellularLocation>
        <location evidence="1">Cell inner membrane</location>
        <topology evidence="1">Peripheral membrane protein</topology>
    </subcellularLocation>
</comment>
<comment type="similarity">
    <text evidence="1">Belongs to the ATPase gamma chain family.</text>
</comment>
<reference key="1">
    <citation type="submission" date="2006-12" db="EMBL/GenBank/DDBJ databases">
        <title>Complete sequence of Shewanella amazonensis SB2B.</title>
        <authorList>
            <consortium name="US DOE Joint Genome Institute"/>
            <person name="Copeland A."/>
            <person name="Lucas S."/>
            <person name="Lapidus A."/>
            <person name="Barry K."/>
            <person name="Detter J.C."/>
            <person name="Glavina del Rio T."/>
            <person name="Hammon N."/>
            <person name="Israni S."/>
            <person name="Dalin E."/>
            <person name="Tice H."/>
            <person name="Pitluck S."/>
            <person name="Munk A.C."/>
            <person name="Brettin T."/>
            <person name="Bruce D."/>
            <person name="Han C."/>
            <person name="Tapia R."/>
            <person name="Gilna P."/>
            <person name="Schmutz J."/>
            <person name="Larimer F."/>
            <person name="Land M."/>
            <person name="Hauser L."/>
            <person name="Kyrpides N."/>
            <person name="Mikhailova N."/>
            <person name="Fredrickson J."/>
            <person name="Richardson P."/>
        </authorList>
    </citation>
    <scope>NUCLEOTIDE SEQUENCE [LARGE SCALE GENOMIC DNA]</scope>
    <source>
        <strain>ATCC BAA-1098 / SB2B</strain>
    </source>
</reference>
<sequence length="286" mass="31554">MAGAKEIKTKIASVKNTQKITSAMEMVAASKMRRAQDRMTASRPYAESMRKVIGHVAQGSLEYKHPYLEVREAKRVGYIVVASDRGLCGGLNVNLFKKVVSDVKNWKAQGVEVEFCPIGARSVQFFKAFGGKVQAHASGLGDAPKLADLIGTVRVMLQAYNEGKLDRLYVVFNKFVNTMTQTPVIEQLLPLPKSEDDEIAHHWDYIYEQDPKDLLDTLLVRYVESQVYQGVVENIASEQAARMVAMKAATDNAGTLIDDLQLVYNKARQAAITQELSEIVSGAAAV</sequence>
<feature type="chain" id="PRO_1000053324" description="ATP synthase gamma chain">
    <location>
        <begin position="1"/>
        <end position="286"/>
    </location>
</feature>
<accession>A1SBU1</accession>